<accession>Q057A1</accession>
<feature type="chain" id="PRO_1000008807" description="Elongation factor G">
    <location>
        <begin position="1"/>
        <end position="701"/>
    </location>
</feature>
<feature type="domain" description="tr-type G">
    <location>
        <begin position="8"/>
        <end position="290"/>
    </location>
</feature>
<feature type="binding site" evidence="1">
    <location>
        <begin position="17"/>
        <end position="24"/>
    </location>
    <ligand>
        <name>GTP</name>
        <dbReference type="ChEBI" id="CHEBI:37565"/>
    </ligand>
</feature>
<feature type="binding site" evidence="1">
    <location>
        <begin position="88"/>
        <end position="92"/>
    </location>
    <ligand>
        <name>GTP</name>
        <dbReference type="ChEBI" id="CHEBI:37565"/>
    </ligand>
</feature>
<feature type="binding site" evidence="1">
    <location>
        <begin position="142"/>
        <end position="145"/>
    </location>
    <ligand>
        <name>GTP</name>
        <dbReference type="ChEBI" id="CHEBI:37565"/>
    </ligand>
</feature>
<sequence length="701" mass="78770">MARITPITQYRNIGISAHIDAGKTTTTERILFYTGVNHKLGEVHDGAATMDWMVQEQERGITITSAATTTFWSGMAKQFLSHRINIIDTPGHVDFTIEVERSMRVLDGVVMIYCAVGGVQPQSETVWRQANKYKIPRIAFINKMDRTGADFLKVVNQISTRLHVISVPIQLSIGSEENFQGIVDLVKMKAIRWSEHDQGITFKYYDIPKDLLQLANKWHMNLVEVAAEADDELMEKYLQYDDLEEKDIKIGLRKRALNNEIILITCGSAFKNKGVQALLDAIIEYLPSPKDSYKTKNFINQKDSIKNYRYADDKQPFSALAFKIASDSFVGNLTFFRVYSGIVRSGDVVLNSVKDHTERFGRIVQMHANKREEIREVRAGDIAAAIGLKNVTTGDTLCDVNHPIVLEKMDFPEPVISIAVEPKTKIDQEKMGLSLNRLAKEDPSFRVRIDHESNQTIISGMGELHLEIIIDRMRREFKVDANIGKPQVAYRETILNKIENVSGKYIKQSGGRGQYGHVVIDIFPLKPNKSGYLFVNDIKGGVIPGEYISSIDKGIQEQLKSGPLAGYPVVDIGVRLHDGSYHDVDSSELAFKLAASHAFKSAFKLANPILLEPIMHVEVETPEEYMGDVIGDINRRRGIIEGMVDDMIGGKSIKAFVPLSEMFGYATDLRSKTQGRASYSMEFLKYTEAPRSIYDSIVSTQ</sequence>
<name>EFG_BUCCC</name>
<gene>
    <name evidence="1" type="primary">fusA</name>
    <name type="ordered locus">BCc_344</name>
</gene>
<organism>
    <name type="scientific">Buchnera aphidicola subsp. Cinara cedri (strain Cc)</name>
    <dbReference type="NCBI Taxonomy" id="372461"/>
    <lineage>
        <taxon>Bacteria</taxon>
        <taxon>Pseudomonadati</taxon>
        <taxon>Pseudomonadota</taxon>
        <taxon>Gammaproteobacteria</taxon>
        <taxon>Enterobacterales</taxon>
        <taxon>Erwiniaceae</taxon>
        <taxon>Buchnera</taxon>
    </lineage>
</organism>
<evidence type="ECO:0000255" key="1">
    <source>
        <dbReference type="HAMAP-Rule" id="MF_00054"/>
    </source>
</evidence>
<comment type="function">
    <text evidence="1">Catalyzes the GTP-dependent ribosomal translocation step during translation elongation. During this step, the ribosome changes from the pre-translocational (PRE) to the post-translocational (POST) state as the newly formed A-site-bound peptidyl-tRNA and P-site-bound deacylated tRNA move to the P and E sites, respectively. Catalyzes the coordinated movement of the two tRNA molecules, the mRNA and conformational changes in the ribosome.</text>
</comment>
<comment type="subcellular location">
    <subcellularLocation>
        <location evidence="1">Cytoplasm</location>
    </subcellularLocation>
</comment>
<comment type="similarity">
    <text evidence="1">Belongs to the TRAFAC class translation factor GTPase superfamily. Classic translation factor GTPase family. EF-G/EF-2 subfamily.</text>
</comment>
<proteinExistence type="inferred from homology"/>
<keyword id="KW-0963">Cytoplasm</keyword>
<keyword id="KW-0251">Elongation factor</keyword>
<keyword id="KW-0342">GTP-binding</keyword>
<keyword id="KW-0547">Nucleotide-binding</keyword>
<keyword id="KW-0648">Protein biosynthesis</keyword>
<keyword id="KW-1185">Reference proteome</keyword>
<protein>
    <recommendedName>
        <fullName evidence="1">Elongation factor G</fullName>
        <shortName evidence="1">EF-G</shortName>
    </recommendedName>
</protein>
<dbReference type="EMBL" id="CP000263">
    <property type="protein sequence ID" value="ABJ90798.1"/>
    <property type="molecule type" value="Genomic_DNA"/>
</dbReference>
<dbReference type="RefSeq" id="WP_011672717.1">
    <property type="nucleotide sequence ID" value="NC_008513.1"/>
</dbReference>
<dbReference type="SMR" id="Q057A1"/>
<dbReference type="STRING" id="372461.BCc_344"/>
<dbReference type="KEGG" id="bcc:BCc_344"/>
<dbReference type="eggNOG" id="COG0480">
    <property type="taxonomic scope" value="Bacteria"/>
</dbReference>
<dbReference type="HOGENOM" id="CLU_002794_4_1_6"/>
<dbReference type="OrthoDB" id="9804431at2"/>
<dbReference type="Proteomes" id="UP000000669">
    <property type="component" value="Chromosome"/>
</dbReference>
<dbReference type="GO" id="GO:0005737">
    <property type="term" value="C:cytoplasm"/>
    <property type="evidence" value="ECO:0007669"/>
    <property type="project" value="UniProtKB-SubCell"/>
</dbReference>
<dbReference type="GO" id="GO:0005525">
    <property type="term" value="F:GTP binding"/>
    <property type="evidence" value="ECO:0007669"/>
    <property type="project" value="UniProtKB-UniRule"/>
</dbReference>
<dbReference type="GO" id="GO:0003924">
    <property type="term" value="F:GTPase activity"/>
    <property type="evidence" value="ECO:0007669"/>
    <property type="project" value="InterPro"/>
</dbReference>
<dbReference type="GO" id="GO:0097216">
    <property type="term" value="F:guanosine tetraphosphate binding"/>
    <property type="evidence" value="ECO:0007669"/>
    <property type="project" value="UniProtKB-ARBA"/>
</dbReference>
<dbReference type="GO" id="GO:0003746">
    <property type="term" value="F:translation elongation factor activity"/>
    <property type="evidence" value="ECO:0007669"/>
    <property type="project" value="UniProtKB-UniRule"/>
</dbReference>
<dbReference type="GO" id="GO:0032790">
    <property type="term" value="P:ribosome disassembly"/>
    <property type="evidence" value="ECO:0007669"/>
    <property type="project" value="TreeGrafter"/>
</dbReference>
<dbReference type="CDD" id="cd01886">
    <property type="entry name" value="EF-G"/>
    <property type="match status" value="1"/>
</dbReference>
<dbReference type="CDD" id="cd16262">
    <property type="entry name" value="EFG_III"/>
    <property type="match status" value="1"/>
</dbReference>
<dbReference type="CDD" id="cd01434">
    <property type="entry name" value="EFG_mtEFG1_IV"/>
    <property type="match status" value="1"/>
</dbReference>
<dbReference type="CDD" id="cd03713">
    <property type="entry name" value="EFG_mtEFG_C"/>
    <property type="match status" value="1"/>
</dbReference>
<dbReference type="CDD" id="cd04088">
    <property type="entry name" value="EFG_mtEFG_II"/>
    <property type="match status" value="1"/>
</dbReference>
<dbReference type="FunFam" id="2.40.30.10:FF:000006">
    <property type="entry name" value="Elongation factor G"/>
    <property type="match status" value="1"/>
</dbReference>
<dbReference type="FunFam" id="3.30.230.10:FF:000003">
    <property type="entry name" value="Elongation factor G"/>
    <property type="match status" value="1"/>
</dbReference>
<dbReference type="FunFam" id="3.30.70.240:FF:000001">
    <property type="entry name" value="Elongation factor G"/>
    <property type="match status" value="1"/>
</dbReference>
<dbReference type="FunFam" id="3.30.70.870:FF:000001">
    <property type="entry name" value="Elongation factor G"/>
    <property type="match status" value="1"/>
</dbReference>
<dbReference type="FunFam" id="3.40.50.300:FF:000029">
    <property type="entry name" value="Elongation factor G"/>
    <property type="match status" value="1"/>
</dbReference>
<dbReference type="Gene3D" id="3.30.230.10">
    <property type="match status" value="1"/>
</dbReference>
<dbReference type="Gene3D" id="3.30.70.240">
    <property type="match status" value="1"/>
</dbReference>
<dbReference type="Gene3D" id="3.30.70.870">
    <property type="entry name" value="Elongation Factor G (Translational Gtpase), domain 3"/>
    <property type="match status" value="1"/>
</dbReference>
<dbReference type="Gene3D" id="3.40.50.300">
    <property type="entry name" value="P-loop containing nucleotide triphosphate hydrolases"/>
    <property type="match status" value="1"/>
</dbReference>
<dbReference type="Gene3D" id="2.40.30.10">
    <property type="entry name" value="Translation factors"/>
    <property type="match status" value="1"/>
</dbReference>
<dbReference type="HAMAP" id="MF_00054_B">
    <property type="entry name" value="EF_G_EF_2_B"/>
    <property type="match status" value="1"/>
</dbReference>
<dbReference type="InterPro" id="IPR041095">
    <property type="entry name" value="EFG_II"/>
</dbReference>
<dbReference type="InterPro" id="IPR009022">
    <property type="entry name" value="EFG_III"/>
</dbReference>
<dbReference type="InterPro" id="IPR035647">
    <property type="entry name" value="EFG_III/V"/>
</dbReference>
<dbReference type="InterPro" id="IPR047872">
    <property type="entry name" value="EFG_IV"/>
</dbReference>
<dbReference type="InterPro" id="IPR035649">
    <property type="entry name" value="EFG_V"/>
</dbReference>
<dbReference type="InterPro" id="IPR000640">
    <property type="entry name" value="EFG_V-like"/>
</dbReference>
<dbReference type="InterPro" id="IPR004161">
    <property type="entry name" value="EFTu-like_2"/>
</dbReference>
<dbReference type="InterPro" id="IPR031157">
    <property type="entry name" value="G_TR_CS"/>
</dbReference>
<dbReference type="InterPro" id="IPR027417">
    <property type="entry name" value="P-loop_NTPase"/>
</dbReference>
<dbReference type="InterPro" id="IPR020568">
    <property type="entry name" value="Ribosomal_Su5_D2-typ_SF"/>
</dbReference>
<dbReference type="InterPro" id="IPR014721">
    <property type="entry name" value="Ribsml_uS5_D2-typ_fold_subgr"/>
</dbReference>
<dbReference type="InterPro" id="IPR005225">
    <property type="entry name" value="Small_GTP-bd"/>
</dbReference>
<dbReference type="InterPro" id="IPR000795">
    <property type="entry name" value="T_Tr_GTP-bd_dom"/>
</dbReference>
<dbReference type="InterPro" id="IPR009000">
    <property type="entry name" value="Transl_B-barrel_sf"/>
</dbReference>
<dbReference type="InterPro" id="IPR004540">
    <property type="entry name" value="Transl_elong_EFG/EF2"/>
</dbReference>
<dbReference type="InterPro" id="IPR005517">
    <property type="entry name" value="Transl_elong_EFG/EF2_IV"/>
</dbReference>
<dbReference type="NCBIfam" id="TIGR00484">
    <property type="entry name" value="EF-G"/>
    <property type="match status" value="1"/>
</dbReference>
<dbReference type="NCBIfam" id="NF009381">
    <property type="entry name" value="PRK12740.1-5"/>
    <property type="match status" value="1"/>
</dbReference>
<dbReference type="NCBIfam" id="TIGR00231">
    <property type="entry name" value="small_GTP"/>
    <property type="match status" value="1"/>
</dbReference>
<dbReference type="PANTHER" id="PTHR43261:SF1">
    <property type="entry name" value="RIBOSOME-RELEASING FACTOR 2, MITOCHONDRIAL"/>
    <property type="match status" value="1"/>
</dbReference>
<dbReference type="PANTHER" id="PTHR43261">
    <property type="entry name" value="TRANSLATION ELONGATION FACTOR G-RELATED"/>
    <property type="match status" value="1"/>
</dbReference>
<dbReference type="Pfam" id="PF00679">
    <property type="entry name" value="EFG_C"/>
    <property type="match status" value="1"/>
</dbReference>
<dbReference type="Pfam" id="PF14492">
    <property type="entry name" value="EFG_III"/>
    <property type="match status" value="1"/>
</dbReference>
<dbReference type="Pfam" id="PF03764">
    <property type="entry name" value="EFG_IV"/>
    <property type="match status" value="1"/>
</dbReference>
<dbReference type="Pfam" id="PF00009">
    <property type="entry name" value="GTP_EFTU"/>
    <property type="match status" value="1"/>
</dbReference>
<dbReference type="Pfam" id="PF03144">
    <property type="entry name" value="GTP_EFTU_D2"/>
    <property type="match status" value="1"/>
</dbReference>
<dbReference type="PRINTS" id="PR00315">
    <property type="entry name" value="ELONGATNFCT"/>
</dbReference>
<dbReference type="SMART" id="SM00838">
    <property type="entry name" value="EFG_C"/>
    <property type="match status" value="1"/>
</dbReference>
<dbReference type="SMART" id="SM00889">
    <property type="entry name" value="EFG_IV"/>
    <property type="match status" value="1"/>
</dbReference>
<dbReference type="SUPFAM" id="SSF54980">
    <property type="entry name" value="EF-G C-terminal domain-like"/>
    <property type="match status" value="2"/>
</dbReference>
<dbReference type="SUPFAM" id="SSF52540">
    <property type="entry name" value="P-loop containing nucleoside triphosphate hydrolases"/>
    <property type="match status" value="1"/>
</dbReference>
<dbReference type="SUPFAM" id="SSF54211">
    <property type="entry name" value="Ribosomal protein S5 domain 2-like"/>
    <property type="match status" value="1"/>
</dbReference>
<dbReference type="SUPFAM" id="SSF50447">
    <property type="entry name" value="Translation proteins"/>
    <property type="match status" value="1"/>
</dbReference>
<dbReference type="PROSITE" id="PS00301">
    <property type="entry name" value="G_TR_1"/>
    <property type="match status" value="1"/>
</dbReference>
<dbReference type="PROSITE" id="PS51722">
    <property type="entry name" value="G_TR_2"/>
    <property type="match status" value="1"/>
</dbReference>
<reference key="1">
    <citation type="journal article" date="2006" name="Science">
        <title>A small microbial genome: the end of a long symbiotic relationship?</title>
        <authorList>
            <person name="Perez-Brocal V."/>
            <person name="Gil R."/>
            <person name="Ramos S."/>
            <person name="Lamelas A."/>
            <person name="Postigo M."/>
            <person name="Michelena J.M."/>
            <person name="Silva F.J."/>
            <person name="Moya A."/>
            <person name="Latorre A."/>
        </authorList>
    </citation>
    <scope>NUCLEOTIDE SEQUENCE [LARGE SCALE GENOMIC DNA]</scope>
    <source>
        <strain>Cc</strain>
    </source>
</reference>